<keyword id="KW-0002">3D-structure</keyword>
<keyword id="KW-0687">Ribonucleoprotein</keyword>
<keyword id="KW-0689">Ribosomal protein</keyword>
<organism>
    <name type="scientific">Thermus thermophilus (strain ATCC BAA-163 / DSM 7039 / HB27)</name>
    <dbReference type="NCBI Taxonomy" id="262724"/>
    <lineage>
        <taxon>Bacteria</taxon>
        <taxon>Thermotogati</taxon>
        <taxon>Deinococcota</taxon>
        <taxon>Deinococci</taxon>
        <taxon>Thermales</taxon>
        <taxon>Thermaceae</taxon>
        <taxon>Thermus</taxon>
    </lineage>
</organism>
<name>RL30_THET2</name>
<proteinExistence type="evidence at protein level"/>
<protein>
    <recommendedName>
        <fullName evidence="1">Large ribosomal subunit protein uL30</fullName>
    </recommendedName>
    <alternativeName>
        <fullName evidence="2">50S ribosomal protein L30</fullName>
    </alternativeName>
</protein>
<gene>
    <name evidence="1" type="primary">rpmD</name>
    <name type="ordered locus">TT_C1310</name>
</gene>
<comment type="subunit">
    <text evidence="1">Part of the 50S ribosomal subunit.</text>
</comment>
<comment type="similarity">
    <text evidence="1">Belongs to the universal ribosomal protein uL30 family.</text>
</comment>
<feature type="chain" id="PRO_1000056126" description="Large ribosomal subunit protein uL30">
    <location>
        <begin position="1"/>
        <end position="60"/>
    </location>
</feature>
<feature type="strand" evidence="3">
    <location>
        <begin position="3"/>
        <end position="8"/>
    </location>
</feature>
<feature type="helix" evidence="3">
    <location>
        <begin position="17"/>
        <end position="25"/>
    </location>
</feature>
<feature type="strand" evidence="4">
    <location>
        <begin position="30"/>
        <end position="32"/>
    </location>
</feature>
<feature type="strand" evidence="3">
    <location>
        <begin position="36"/>
        <end position="38"/>
    </location>
</feature>
<feature type="helix" evidence="3">
    <location>
        <begin position="41"/>
        <end position="49"/>
    </location>
</feature>
<feature type="helix" evidence="3">
    <location>
        <begin position="50"/>
        <end position="53"/>
    </location>
</feature>
<feature type="strand" evidence="3">
    <location>
        <begin position="54"/>
        <end position="59"/>
    </location>
</feature>
<dbReference type="EMBL" id="AE017221">
    <property type="protein sequence ID" value="AAS81652.1"/>
    <property type="molecule type" value="Genomic_DNA"/>
</dbReference>
<dbReference type="RefSeq" id="WP_008633387.1">
    <property type="nucleotide sequence ID" value="NC_005835.1"/>
</dbReference>
<dbReference type="PDB" id="4V4I">
    <property type="method" value="X-ray"/>
    <property type="resolution" value="3.71 A"/>
    <property type="chains" value="X=1-60"/>
</dbReference>
<dbReference type="PDB" id="4V4J">
    <property type="method" value="X-ray"/>
    <property type="resolution" value="3.83 A"/>
    <property type="chains" value="X=1-60"/>
</dbReference>
<dbReference type="PDB" id="4V63">
    <property type="method" value="X-ray"/>
    <property type="resolution" value="3.21 A"/>
    <property type="chains" value="B3/D3=1-60"/>
</dbReference>
<dbReference type="PDB" id="4V67">
    <property type="method" value="X-ray"/>
    <property type="resolution" value="3.00 A"/>
    <property type="chains" value="B3/D3=1-60"/>
</dbReference>
<dbReference type="PDB" id="4V7P">
    <property type="method" value="X-ray"/>
    <property type="resolution" value="3.62 A"/>
    <property type="chains" value="BZ/CZ=1-59"/>
</dbReference>
<dbReference type="PDB" id="4V83">
    <property type="method" value="X-ray"/>
    <property type="resolution" value="3.50 A"/>
    <property type="chains" value="BZ/DZ=1-59"/>
</dbReference>
<dbReference type="PDB" id="4V84">
    <property type="method" value="X-ray"/>
    <property type="resolution" value="3.40 A"/>
    <property type="chains" value="BZ/DZ=1-59"/>
</dbReference>
<dbReference type="PDB" id="4V9J">
    <property type="method" value="X-ray"/>
    <property type="resolution" value="3.86 A"/>
    <property type="chains" value="B3/D3=1-60"/>
</dbReference>
<dbReference type="PDB" id="4V9K">
    <property type="method" value="X-ray"/>
    <property type="resolution" value="3.50 A"/>
    <property type="chains" value="B3/D3=1-60"/>
</dbReference>
<dbReference type="PDB" id="4V9L">
    <property type="method" value="X-ray"/>
    <property type="resolution" value="3.50 A"/>
    <property type="chains" value="B3/D3=1-60"/>
</dbReference>
<dbReference type="PDB" id="4V9M">
    <property type="method" value="X-ray"/>
    <property type="resolution" value="4.00 A"/>
    <property type="chains" value="B3/D3=1-60"/>
</dbReference>
<dbReference type="PDB" id="4V9N">
    <property type="method" value="X-ray"/>
    <property type="resolution" value="3.40 A"/>
    <property type="chains" value="B3/D3=1-59"/>
</dbReference>
<dbReference type="PDB" id="4V9Q">
    <property type="method" value="X-ray"/>
    <property type="resolution" value="3.40 A"/>
    <property type="chains" value="AZ/CZ=1-59"/>
</dbReference>
<dbReference type="PDB" id="4W29">
    <property type="method" value="X-ray"/>
    <property type="resolution" value="3.80 A"/>
    <property type="chains" value="B3/D3=1-60"/>
</dbReference>
<dbReference type="PDB" id="4XEJ">
    <property type="method" value="X-ray"/>
    <property type="resolution" value="3.80 A"/>
    <property type="chains" value="AL30/BL30=1-59"/>
</dbReference>
<dbReference type="PDB" id="5J4D">
    <property type="method" value="X-ray"/>
    <property type="resolution" value="3.10 A"/>
    <property type="chains" value="AA/FC=1-60"/>
</dbReference>
<dbReference type="PDB" id="5V8I">
    <property type="method" value="X-ray"/>
    <property type="resolution" value="3.25 A"/>
    <property type="chains" value="13/23=1-60"/>
</dbReference>
<dbReference type="PDB" id="6B4V">
    <property type="method" value="X-ray"/>
    <property type="resolution" value="3.40 A"/>
    <property type="chains" value="AA/EC=1-60"/>
</dbReference>
<dbReference type="PDB" id="6BOH">
    <property type="method" value="X-ray"/>
    <property type="resolution" value="3.40 A"/>
    <property type="chains" value="AA/FC=1-60"/>
</dbReference>
<dbReference type="PDB" id="6BOK">
    <property type="method" value="X-ray"/>
    <property type="resolution" value="3.55 A"/>
    <property type="chains" value="AA/DC=1-60"/>
</dbReference>
<dbReference type="PDB" id="6N1D">
    <property type="method" value="X-ray"/>
    <property type="resolution" value="3.20 A"/>
    <property type="chains" value="AL30/BL30=1-60"/>
</dbReference>
<dbReference type="PDBsum" id="4V4I"/>
<dbReference type="PDBsum" id="4V4J"/>
<dbReference type="PDBsum" id="4V63"/>
<dbReference type="PDBsum" id="4V67"/>
<dbReference type="PDBsum" id="4V7P"/>
<dbReference type="PDBsum" id="4V83"/>
<dbReference type="PDBsum" id="4V84"/>
<dbReference type="PDBsum" id="4V9J"/>
<dbReference type="PDBsum" id="4V9K"/>
<dbReference type="PDBsum" id="4V9L"/>
<dbReference type="PDBsum" id="4V9M"/>
<dbReference type="PDBsum" id="4V9N"/>
<dbReference type="PDBsum" id="4V9Q"/>
<dbReference type="PDBsum" id="4W29"/>
<dbReference type="PDBsum" id="4XEJ"/>
<dbReference type="PDBsum" id="5J4D"/>
<dbReference type="PDBsum" id="5V8I"/>
<dbReference type="PDBsum" id="6B4V"/>
<dbReference type="PDBsum" id="6BOH"/>
<dbReference type="PDBsum" id="6BOK"/>
<dbReference type="PDBsum" id="6N1D"/>
<dbReference type="SMR" id="Q72I22"/>
<dbReference type="IntAct" id="Q72I22">
    <property type="interactions" value="4"/>
</dbReference>
<dbReference type="GeneID" id="3169818"/>
<dbReference type="KEGG" id="tth:TT_C1310"/>
<dbReference type="eggNOG" id="COG1841">
    <property type="taxonomic scope" value="Bacteria"/>
</dbReference>
<dbReference type="HOGENOM" id="CLU_131047_1_3_0"/>
<dbReference type="Proteomes" id="UP000000592">
    <property type="component" value="Chromosome"/>
</dbReference>
<dbReference type="GO" id="GO:0022625">
    <property type="term" value="C:cytosolic large ribosomal subunit"/>
    <property type="evidence" value="ECO:0007669"/>
    <property type="project" value="TreeGrafter"/>
</dbReference>
<dbReference type="GO" id="GO:0003735">
    <property type="term" value="F:structural constituent of ribosome"/>
    <property type="evidence" value="ECO:0007669"/>
    <property type="project" value="InterPro"/>
</dbReference>
<dbReference type="GO" id="GO:0006412">
    <property type="term" value="P:translation"/>
    <property type="evidence" value="ECO:0007669"/>
    <property type="project" value="UniProtKB-UniRule"/>
</dbReference>
<dbReference type="CDD" id="cd01658">
    <property type="entry name" value="Ribosomal_L30"/>
    <property type="match status" value="1"/>
</dbReference>
<dbReference type="Gene3D" id="3.30.1390.20">
    <property type="entry name" value="Ribosomal protein L30, ferredoxin-like fold domain"/>
    <property type="match status" value="1"/>
</dbReference>
<dbReference type="HAMAP" id="MF_01371_B">
    <property type="entry name" value="Ribosomal_uL30_B"/>
    <property type="match status" value="1"/>
</dbReference>
<dbReference type="InterPro" id="IPR036919">
    <property type="entry name" value="Ribo_uL30_ferredoxin-like_sf"/>
</dbReference>
<dbReference type="InterPro" id="IPR005996">
    <property type="entry name" value="Ribosomal_uL30_bac-type"/>
</dbReference>
<dbReference type="InterPro" id="IPR018038">
    <property type="entry name" value="Ribosomal_uL30_CS"/>
</dbReference>
<dbReference type="InterPro" id="IPR016082">
    <property type="entry name" value="Ribosomal_uL30_ferredoxin-like"/>
</dbReference>
<dbReference type="NCBIfam" id="TIGR01308">
    <property type="entry name" value="rpmD_bact"/>
    <property type="match status" value="1"/>
</dbReference>
<dbReference type="PANTHER" id="PTHR15892:SF2">
    <property type="entry name" value="LARGE RIBOSOMAL SUBUNIT PROTEIN UL30M"/>
    <property type="match status" value="1"/>
</dbReference>
<dbReference type="PANTHER" id="PTHR15892">
    <property type="entry name" value="MITOCHONDRIAL RIBOSOMAL PROTEIN L30"/>
    <property type="match status" value="1"/>
</dbReference>
<dbReference type="Pfam" id="PF00327">
    <property type="entry name" value="Ribosomal_L30"/>
    <property type="match status" value="1"/>
</dbReference>
<dbReference type="PIRSF" id="PIRSF002211">
    <property type="entry name" value="Ribosomal_L30_bac-type"/>
    <property type="match status" value="1"/>
</dbReference>
<dbReference type="SUPFAM" id="SSF55129">
    <property type="entry name" value="Ribosomal protein L30p/L7e"/>
    <property type="match status" value="1"/>
</dbReference>
<dbReference type="PROSITE" id="PS00634">
    <property type="entry name" value="RIBOSOMAL_L30"/>
    <property type="match status" value="1"/>
</dbReference>
<sequence length="60" mass="6785">MPRLKVKLVKSPIGYPKDQKAALKALGLRRLQQERVLEDTPAIRGNVEKVAHLVRVEVVE</sequence>
<evidence type="ECO:0000255" key="1">
    <source>
        <dbReference type="HAMAP-Rule" id="MF_01371"/>
    </source>
</evidence>
<evidence type="ECO:0000305" key="2"/>
<evidence type="ECO:0007829" key="3">
    <source>
        <dbReference type="PDB" id="4V67"/>
    </source>
</evidence>
<evidence type="ECO:0007829" key="4">
    <source>
        <dbReference type="PDB" id="4V9K"/>
    </source>
</evidence>
<accession>Q72I22</accession>
<reference key="1">
    <citation type="journal article" date="2004" name="Nat. Biotechnol.">
        <title>The genome sequence of the extreme thermophile Thermus thermophilus.</title>
        <authorList>
            <person name="Henne A."/>
            <person name="Brueggemann H."/>
            <person name="Raasch C."/>
            <person name="Wiezer A."/>
            <person name="Hartsch T."/>
            <person name="Liesegang H."/>
            <person name="Johann A."/>
            <person name="Lienard T."/>
            <person name="Gohl O."/>
            <person name="Martinez-Arias R."/>
            <person name="Jacobi C."/>
            <person name="Starkuviene V."/>
            <person name="Schlenczeck S."/>
            <person name="Dencker S."/>
            <person name="Huber R."/>
            <person name="Klenk H.-P."/>
            <person name="Kramer W."/>
            <person name="Merkl R."/>
            <person name="Gottschalk G."/>
            <person name="Fritz H.-J."/>
        </authorList>
    </citation>
    <scope>NUCLEOTIDE SEQUENCE [LARGE SCALE GENOMIC DNA]</scope>
    <source>
        <strain>ATCC BAA-163 / DSM 7039 / HB27</strain>
    </source>
</reference>